<protein>
    <recommendedName>
        <fullName>Phenylalanine--tRNA ligase beta subunit</fullName>
        <ecNumber>6.1.1.20</ecNumber>
    </recommendedName>
    <alternativeName>
        <fullName>Phenylalanyl-tRNA synthetase beta subunit</fullName>
        <shortName>PheRS</shortName>
    </alternativeName>
</protein>
<feature type="chain" id="PRO_0000126975" description="Phenylalanine--tRNA ligase beta subunit">
    <location>
        <begin position="1"/>
        <end position="788"/>
    </location>
</feature>
<feature type="domain" description="tRNA-binding">
    <location>
        <begin position="39"/>
        <end position="147"/>
    </location>
</feature>
<feature type="domain" description="B5">
    <location>
        <begin position="399"/>
        <end position="472"/>
    </location>
</feature>
<feature type="domain" description="FDX-ACB">
    <location>
        <begin position="694"/>
        <end position="787"/>
    </location>
</feature>
<feature type="binding site" evidence="1">
    <location>
        <position position="450"/>
    </location>
    <ligand>
        <name>Mg(2+)</name>
        <dbReference type="ChEBI" id="CHEBI:18420"/>
        <note>shared with alpha subunit</note>
    </ligand>
</feature>
<feature type="binding site" evidence="1">
    <location>
        <position position="456"/>
    </location>
    <ligand>
        <name>Mg(2+)</name>
        <dbReference type="ChEBI" id="CHEBI:18420"/>
        <note>shared with alpha subunit</note>
    </ligand>
</feature>
<feature type="binding site" evidence="1">
    <location>
        <position position="459"/>
    </location>
    <ligand>
        <name>Mg(2+)</name>
        <dbReference type="ChEBI" id="CHEBI:18420"/>
        <note>shared with alpha subunit</note>
    </ligand>
</feature>
<feature type="binding site" evidence="1">
    <location>
        <position position="460"/>
    </location>
    <ligand>
        <name>Mg(2+)</name>
        <dbReference type="ChEBI" id="CHEBI:18420"/>
        <note>shared with alpha subunit</note>
    </ligand>
</feature>
<sequence length="788" mass="90073">MRVPESWLREFVDLDWDIEQIAERLTFSGTSVEDILRPFNVSGEIITARVIERFDHPASEKLIVCKVDTGKRIYTVITADKTVNEGDYVILALEGATLNNGLKIEPREFKGVISEGMLCSLEELGLEEKSDRVYRFPDPVELGVNVVEEYGLNERVLDIEITPNRPDCLSIIGVARELSALSGRPLNKPQPDVSFVDEDVQFDVEIEDVEGCPRYSARIMKGVTVKDSPLWMKARLVAAGVRSLNNVVDATNYVMIELGHPVHAFDLNRLKNKRIVVKSAKGGERVLLLDEKEYELKGGEVLITDGENVLALGGIMGGMESGVYDDTRDLVLEVAYFDPVRIRKAAKALGISSESSYRFERGVDPNDVELVSLRLAELIQKLAGGYVLRKFWDVYPRKIEPKKVMLRKARIEKILGTKVEEPGDILRRLEFQVEDRGDSYEVLVPTFRPDVEREIDLIEEIGRIYGYEKVESKVISVPAVNRGWGEKQLFRREISQFMKGMGFDEVVTFSFVDSQKVKKWPLVDREPIALSNPIASDMDVMRTSQFYSLIQVLAENFKRQNRDLKLFEIGKIYFKENGNFREIETLSAMSCGLENPGDYTDKRSVSFYTIKGVLDELFFRLGVNVVYRAAEIPGLFPTRSARIYVENREIGFIGMVDPKLLDEYDVKEDTYFFEIDMELLRKYASKRPAYRPTPRFPAVRRDISFLLPKGFESVKIIELFKKSGGDLVEEVGVFDIYEGKGIPENMVSVTLYVVFRHPERTLTDEEVNKIFEEMVQKAEREFGIRRRF</sequence>
<organism>
    <name type="scientific">Thermotoga maritima (strain ATCC 43589 / DSM 3109 / JCM 10099 / NBRC 100826 / MSB8)</name>
    <dbReference type="NCBI Taxonomy" id="243274"/>
    <lineage>
        <taxon>Bacteria</taxon>
        <taxon>Thermotogati</taxon>
        <taxon>Thermotogota</taxon>
        <taxon>Thermotogae</taxon>
        <taxon>Thermotogales</taxon>
        <taxon>Thermotogaceae</taxon>
        <taxon>Thermotoga</taxon>
    </lineage>
</organism>
<accession>Q9WZS9</accession>
<gene>
    <name type="primary">pheT</name>
    <name type="ordered locus">TM_0822</name>
</gene>
<evidence type="ECO:0000250" key="1"/>
<evidence type="ECO:0000305" key="2"/>
<proteinExistence type="inferred from homology"/>
<keyword id="KW-0030">Aminoacyl-tRNA synthetase</keyword>
<keyword id="KW-0067">ATP-binding</keyword>
<keyword id="KW-0963">Cytoplasm</keyword>
<keyword id="KW-0436">Ligase</keyword>
<keyword id="KW-0460">Magnesium</keyword>
<keyword id="KW-0479">Metal-binding</keyword>
<keyword id="KW-0547">Nucleotide-binding</keyword>
<keyword id="KW-0648">Protein biosynthesis</keyword>
<keyword id="KW-1185">Reference proteome</keyword>
<keyword id="KW-0694">RNA-binding</keyword>
<keyword id="KW-0820">tRNA-binding</keyword>
<reference key="1">
    <citation type="journal article" date="1999" name="Nature">
        <title>Evidence for lateral gene transfer between Archaea and Bacteria from genome sequence of Thermotoga maritima.</title>
        <authorList>
            <person name="Nelson K.E."/>
            <person name="Clayton R.A."/>
            <person name="Gill S.R."/>
            <person name="Gwinn M.L."/>
            <person name="Dodson R.J."/>
            <person name="Haft D.H."/>
            <person name="Hickey E.K."/>
            <person name="Peterson J.D."/>
            <person name="Nelson W.C."/>
            <person name="Ketchum K.A."/>
            <person name="McDonald L.A."/>
            <person name="Utterback T.R."/>
            <person name="Malek J.A."/>
            <person name="Linher K.D."/>
            <person name="Garrett M.M."/>
            <person name="Stewart A.M."/>
            <person name="Cotton M.D."/>
            <person name="Pratt M.S."/>
            <person name="Phillips C.A."/>
            <person name="Richardson D.L."/>
            <person name="Heidelberg J.F."/>
            <person name="Sutton G.G."/>
            <person name="Fleischmann R.D."/>
            <person name="Eisen J.A."/>
            <person name="White O."/>
            <person name="Salzberg S.L."/>
            <person name="Smith H.O."/>
            <person name="Venter J.C."/>
            <person name="Fraser C.M."/>
        </authorList>
    </citation>
    <scope>NUCLEOTIDE SEQUENCE [LARGE SCALE GENOMIC DNA]</scope>
    <source>
        <strain>ATCC 43589 / DSM 3109 / JCM 10099 / NBRC 100826 / MSB8</strain>
    </source>
</reference>
<dbReference type="EC" id="6.1.1.20"/>
<dbReference type="EMBL" id="AE000512">
    <property type="protein sequence ID" value="AAD35904.1"/>
    <property type="molecule type" value="Genomic_DNA"/>
</dbReference>
<dbReference type="PIR" id="A72330">
    <property type="entry name" value="A72330"/>
</dbReference>
<dbReference type="RefSeq" id="NP_228631.1">
    <property type="nucleotide sequence ID" value="NC_000853.1"/>
</dbReference>
<dbReference type="RefSeq" id="WP_004080832.1">
    <property type="nucleotide sequence ID" value="NC_000853.1"/>
</dbReference>
<dbReference type="SMR" id="Q9WZS9"/>
<dbReference type="FunCoup" id="Q9WZS9">
    <property type="interactions" value="381"/>
</dbReference>
<dbReference type="STRING" id="243274.TM_0822"/>
<dbReference type="PaxDb" id="243274-THEMA_00530"/>
<dbReference type="EnsemblBacteria" id="AAD35904">
    <property type="protein sequence ID" value="AAD35904"/>
    <property type="gene ID" value="TM_0822"/>
</dbReference>
<dbReference type="KEGG" id="tma:TM0822"/>
<dbReference type="KEGG" id="tmi:THEMA_00530"/>
<dbReference type="KEGG" id="tmm:Tmari_0823"/>
<dbReference type="KEGG" id="tmw:THMA_0843"/>
<dbReference type="eggNOG" id="COG0072">
    <property type="taxonomic scope" value="Bacteria"/>
</dbReference>
<dbReference type="eggNOG" id="COG0073">
    <property type="taxonomic scope" value="Bacteria"/>
</dbReference>
<dbReference type="InParanoid" id="Q9WZS9"/>
<dbReference type="OrthoDB" id="9805455at2"/>
<dbReference type="Proteomes" id="UP000008183">
    <property type="component" value="Chromosome"/>
</dbReference>
<dbReference type="GO" id="GO:0009328">
    <property type="term" value="C:phenylalanine-tRNA ligase complex"/>
    <property type="evidence" value="ECO:0000318"/>
    <property type="project" value="GO_Central"/>
</dbReference>
<dbReference type="GO" id="GO:0005524">
    <property type="term" value="F:ATP binding"/>
    <property type="evidence" value="ECO:0007669"/>
    <property type="project" value="UniProtKB-UniRule"/>
</dbReference>
<dbReference type="GO" id="GO:0000287">
    <property type="term" value="F:magnesium ion binding"/>
    <property type="evidence" value="ECO:0007669"/>
    <property type="project" value="UniProtKB-UniRule"/>
</dbReference>
<dbReference type="GO" id="GO:0004826">
    <property type="term" value="F:phenylalanine-tRNA ligase activity"/>
    <property type="evidence" value="ECO:0007669"/>
    <property type="project" value="UniProtKB-UniRule"/>
</dbReference>
<dbReference type="GO" id="GO:0000049">
    <property type="term" value="F:tRNA binding"/>
    <property type="evidence" value="ECO:0007669"/>
    <property type="project" value="UniProtKB-KW"/>
</dbReference>
<dbReference type="GO" id="GO:0006432">
    <property type="term" value="P:phenylalanyl-tRNA aminoacylation"/>
    <property type="evidence" value="ECO:0000318"/>
    <property type="project" value="GO_Central"/>
</dbReference>
<dbReference type="CDD" id="cd00769">
    <property type="entry name" value="PheRS_beta_core"/>
    <property type="match status" value="1"/>
</dbReference>
<dbReference type="CDD" id="cd02796">
    <property type="entry name" value="tRNA_bind_bactPheRS"/>
    <property type="match status" value="1"/>
</dbReference>
<dbReference type="FunFam" id="2.40.50.140:FF:000698">
    <property type="entry name" value="Phenylalanine--tRNA ligase beta subunit"/>
    <property type="match status" value="1"/>
</dbReference>
<dbReference type="FunFam" id="3.30.70.380:FF:000001">
    <property type="entry name" value="Phenylalanine--tRNA ligase beta subunit"/>
    <property type="match status" value="1"/>
</dbReference>
<dbReference type="FunFam" id="3.50.40.10:FF:000001">
    <property type="entry name" value="Phenylalanine--tRNA ligase beta subunit"/>
    <property type="match status" value="1"/>
</dbReference>
<dbReference type="Gene3D" id="3.30.56.10">
    <property type="match status" value="2"/>
</dbReference>
<dbReference type="Gene3D" id="3.30.930.10">
    <property type="entry name" value="Bira Bifunctional Protein, Domain 2"/>
    <property type="match status" value="1"/>
</dbReference>
<dbReference type="Gene3D" id="3.30.70.380">
    <property type="entry name" value="Ferrodoxin-fold anticodon-binding domain"/>
    <property type="match status" value="1"/>
</dbReference>
<dbReference type="Gene3D" id="2.40.50.140">
    <property type="entry name" value="Nucleic acid-binding proteins"/>
    <property type="match status" value="1"/>
</dbReference>
<dbReference type="Gene3D" id="3.50.40.10">
    <property type="entry name" value="Phenylalanyl-trna Synthetase, Chain B, domain 3"/>
    <property type="match status" value="1"/>
</dbReference>
<dbReference type="HAMAP" id="MF_00283">
    <property type="entry name" value="Phe_tRNA_synth_beta1"/>
    <property type="match status" value="1"/>
</dbReference>
<dbReference type="InterPro" id="IPR045864">
    <property type="entry name" value="aa-tRNA-synth_II/BPL/LPL"/>
</dbReference>
<dbReference type="InterPro" id="IPR005146">
    <property type="entry name" value="B3/B4_tRNA-bd"/>
</dbReference>
<dbReference type="InterPro" id="IPR009061">
    <property type="entry name" value="DNA-bd_dom_put_sf"/>
</dbReference>
<dbReference type="InterPro" id="IPR005121">
    <property type="entry name" value="Fdx_antiC-bd"/>
</dbReference>
<dbReference type="InterPro" id="IPR036690">
    <property type="entry name" value="Fdx_antiC-bd_sf"/>
</dbReference>
<dbReference type="InterPro" id="IPR012340">
    <property type="entry name" value="NA-bd_OB-fold"/>
</dbReference>
<dbReference type="InterPro" id="IPR045060">
    <property type="entry name" value="Phe-tRNA-ligase_IIc_bsu"/>
</dbReference>
<dbReference type="InterPro" id="IPR004532">
    <property type="entry name" value="Phe-tRNA-ligase_IIc_bsu_bact"/>
</dbReference>
<dbReference type="InterPro" id="IPR020825">
    <property type="entry name" value="Phe-tRNA_synthase-like_B3/B4"/>
</dbReference>
<dbReference type="InterPro" id="IPR041616">
    <property type="entry name" value="PheRS_beta_core"/>
</dbReference>
<dbReference type="InterPro" id="IPR002547">
    <property type="entry name" value="tRNA-bd_dom"/>
</dbReference>
<dbReference type="InterPro" id="IPR033714">
    <property type="entry name" value="tRNA_bind_bactPheRS"/>
</dbReference>
<dbReference type="InterPro" id="IPR005147">
    <property type="entry name" value="tRNA_synthase_B5-dom"/>
</dbReference>
<dbReference type="NCBIfam" id="TIGR00472">
    <property type="entry name" value="pheT_bact"/>
    <property type="match status" value="1"/>
</dbReference>
<dbReference type="PANTHER" id="PTHR10947:SF0">
    <property type="entry name" value="PHENYLALANINE--TRNA LIGASE BETA SUBUNIT"/>
    <property type="match status" value="1"/>
</dbReference>
<dbReference type="PANTHER" id="PTHR10947">
    <property type="entry name" value="PHENYLALANYL-TRNA SYNTHETASE BETA CHAIN AND LEUCINE-RICH REPEAT-CONTAINING PROTEIN 47"/>
    <property type="match status" value="1"/>
</dbReference>
<dbReference type="Pfam" id="PF03483">
    <property type="entry name" value="B3_4"/>
    <property type="match status" value="1"/>
</dbReference>
<dbReference type="Pfam" id="PF03484">
    <property type="entry name" value="B5"/>
    <property type="match status" value="1"/>
</dbReference>
<dbReference type="Pfam" id="PF03147">
    <property type="entry name" value="FDX-ACB"/>
    <property type="match status" value="1"/>
</dbReference>
<dbReference type="Pfam" id="PF01588">
    <property type="entry name" value="tRNA_bind"/>
    <property type="match status" value="1"/>
</dbReference>
<dbReference type="Pfam" id="PF17759">
    <property type="entry name" value="tRNA_synthFbeta"/>
    <property type="match status" value="1"/>
</dbReference>
<dbReference type="SMART" id="SM00873">
    <property type="entry name" value="B3_4"/>
    <property type="match status" value="1"/>
</dbReference>
<dbReference type="SMART" id="SM00874">
    <property type="entry name" value="B5"/>
    <property type="match status" value="1"/>
</dbReference>
<dbReference type="SMART" id="SM00896">
    <property type="entry name" value="FDX-ACB"/>
    <property type="match status" value="1"/>
</dbReference>
<dbReference type="SUPFAM" id="SSF54991">
    <property type="entry name" value="Anticodon-binding domain of PheRS"/>
    <property type="match status" value="1"/>
</dbReference>
<dbReference type="SUPFAM" id="SSF55681">
    <property type="entry name" value="Class II aaRS and biotin synthetases"/>
    <property type="match status" value="1"/>
</dbReference>
<dbReference type="SUPFAM" id="SSF50249">
    <property type="entry name" value="Nucleic acid-binding proteins"/>
    <property type="match status" value="1"/>
</dbReference>
<dbReference type="SUPFAM" id="SSF56037">
    <property type="entry name" value="PheT/TilS domain"/>
    <property type="match status" value="1"/>
</dbReference>
<dbReference type="SUPFAM" id="SSF46955">
    <property type="entry name" value="Putative DNA-binding domain"/>
    <property type="match status" value="1"/>
</dbReference>
<dbReference type="PROSITE" id="PS51483">
    <property type="entry name" value="B5"/>
    <property type="match status" value="1"/>
</dbReference>
<dbReference type="PROSITE" id="PS51447">
    <property type="entry name" value="FDX_ACB"/>
    <property type="match status" value="1"/>
</dbReference>
<dbReference type="PROSITE" id="PS50886">
    <property type="entry name" value="TRBD"/>
    <property type="match status" value="1"/>
</dbReference>
<name>SYFB_THEMA</name>
<comment type="catalytic activity">
    <reaction>
        <text>tRNA(Phe) + L-phenylalanine + ATP = L-phenylalanyl-tRNA(Phe) + AMP + diphosphate + H(+)</text>
        <dbReference type="Rhea" id="RHEA:19413"/>
        <dbReference type="Rhea" id="RHEA-COMP:9668"/>
        <dbReference type="Rhea" id="RHEA-COMP:9699"/>
        <dbReference type="ChEBI" id="CHEBI:15378"/>
        <dbReference type="ChEBI" id="CHEBI:30616"/>
        <dbReference type="ChEBI" id="CHEBI:33019"/>
        <dbReference type="ChEBI" id="CHEBI:58095"/>
        <dbReference type="ChEBI" id="CHEBI:78442"/>
        <dbReference type="ChEBI" id="CHEBI:78531"/>
        <dbReference type="ChEBI" id="CHEBI:456215"/>
        <dbReference type="EC" id="6.1.1.20"/>
    </reaction>
</comment>
<comment type="cofactor">
    <cofactor evidence="1">
        <name>Mg(2+)</name>
        <dbReference type="ChEBI" id="CHEBI:18420"/>
    </cofactor>
    <text evidence="1">Binds 2 magnesium ions per tetramer.</text>
</comment>
<comment type="subunit">
    <text evidence="1">Tetramer of two alpha and two beta subunits.</text>
</comment>
<comment type="subcellular location">
    <subcellularLocation>
        <location evidence="1">Cytoplasm</location>
    </subcellularLocation>
</comment>
<comment type="similarity">
    <text evidence="2">Belongs to the phenylalanyl-tRNA synthetase beta subunit family. Type 1 subfamily.</text>
</comment>